<feature type="chain" id="PRO_1000002910" description="UDP-N-acetylenolpyruvoylglucosamine reductase">
    <location>
        <begin position="1"/>
        <end position="295"/>
    </location>
</feature>
<feature type="domain" description="FAD-binding PCMH-type" evidence="1">
    <location>
        <begin position="24"/>
        <end position="188"/>
    </location>
</feature>
<feature type="active site" evidence="1">
    <location>
        <position position="168"/>
    </location>
</feature>
<feature type="active site" description="Proton donor" evidence="1">
    <location>
        <position position="217"/>
    </location>
</feature>
<feature type="active site" evidence="1">
    <location>
        <position position="287"/>
    </location>
</feature>
<sequence>MLILPIVKGEYKKDYNLKHLTWFKVGGNAEIFFKPLDSEDLKSFLIQNKQKLPIKTFGAGSNIIIRDGGIEGVVIKLGQNFSNIEFIDNHLIVGSSCLNYNLAKFCQANAISGFEFLVGIPGTIGGGVAMNAGAYGSEFKDIVVQIEAIDFAGNFLTFTNEEIGFKYRSNNLPKNLIILKVIFKINKGDSENILLRMNEINNARSSTQPIKERTGGSTFANPEGCKSWELIDKAGLRGYRIGGASMSELHCNFMINNGDATAKDLEDLGNFVQQKVCEDSGVKLEWEIKRIGRHP</sequence>
<name>MURB_RICRS</name>
<gene>
    <name evidence="1" type="primary">murB</name>
    <name type="ordered locus">A1G_01905</name>
</gene>
<accession>A8GRC0</accession>
<reference key="1">
    <citation type="submission" date="2007-09" db="EMBL/GenBank/DDBJ databases">
        <title>Complete genome sequence of Rickettsia rickettsii.</title>
        <authorList>
            <person name="Madan A."/>
            <person name="Fahey J."/>
            <person name="Helton E."/>
            <person name="Ketteman M."/>
            <person name="Madan A."/>
            <person name="Rodrigues S."/>
            <person name="Sanchez A."/>
            <person name="Dasch G."/>
            <person name="Eremeeva M."/>
        </authorList>
    </citation>
    <scope>NUCLEOTIDE SEQUENCE [LARGE SCALE GENOMIC DNA]</scope>
    <source>
        <strain>Sheila Smith</strain>
    </source>
</reference>
<evidence type="ECO:0000255" key="1">
    <source>
        <dbReference type="HAMAP-Rule" id="MF_00037"/>
    </source>
</evidence>
<keyword id="KW-0131">Cell cycle</keyword>
<keyword id="KW-0132">Cell division</keyword>
<keyword id="KW-0133">Cell shape</keyword>
<keyword id="KW-0961">Cell wall biogenesis/degradation</keyword>
<keyword id="KW-0963">Cytoplasm</keyword>
<keyword id="KW-0274">FAD</keyword>
<keyword id="KW-0285">Flavoprotein</keyword>
<keyword id="KW-0521">NADP</keyword>
<keyword id="KW-0560">Oxidoreductase</keyword>
<keyword id="KW-0573">Peptidoglycan synthesis</keyword>
<dbReference type="EC" id="1.3.1.98" evidence="1"/>
<dbReference type="EMBL" id="CP000848">
    <property type="protein sequence ID" value="ABV75945.1"/>
    <property type="molecule type" value="Genomic_DNA"/>
</dbReference>
<dbReference type="RefSeq" id="WP_012150547.1">
    <property type="nucleotide sequence ID" value="NZ_CP121767.1"/>
</dbReference>
<dbReference type="SMR" id="A8GRC0"/>
<dbReference type="GeneID" id="79937109"/>
<dbReference type="KEGG" id="rri:A1G_01905"/>
<dbReference type="HOGENOM" id="CLU_035304_1_0_5"/>
<dbReference type="UniPathway" id="UPA00219"/>
<dbReference type="Proteomes" id="UP000006832">
    <property type="component" value="Chromosome"/>
</dbReference>
<dbReference type="GO" id="GO:0005829">
    <property type="term" value="C:cytosol"/>
    <property type="evidence" value="ECO:0007669"/>
    <property type="project" value="TreeGrafter"/>
</dbReference>
<dbReference type="GO" id="GO:0071949">
    <property type="term" value="F:FAD binding"/>
    <property type="evidence" value="ECO:0007669"/>
    <property type="project" value="InterPro"/>
</dbReference>
<dbReference type="GO" id="GO:0008762">
    <property type="term" value="F:UDP-N-acetylmuramate dehydrogenase activity"/>
    <property type="evidence" value="ECO:0007669"/>
    <property type="project" value="UniProtKB-UniRule"/>
</dbReference>
<dbReference type="GO" id="GO:0051301">
    <property type="term" value="P:cell division"/>
    <property type="evidence" value="ECO:0007669"/>
    <property type="project" value="UniProtKB-KW"/>
</dbReference>
<dbReference type="GO" id="GO:0071555">
    <property type="term" value="P:cell wall organization"/>
    <property type="evidence" value="ECO:0007669"/>
    <property type="project" value="UniProtKB-KW"/>
</dbReference>
<dbReference type="GO" id="GO:0009252">
    <property type="term" value="P:peptidoglycan biosynthetic process"/>
    <property type="evidence" value="ECO:0007669"/>
    <property type="project" value="UniProtKB-UniRule"/>
</dbReference>
<dbReference type="GO" id="GO:0008360">
    <property type="term" value="P:regulation of cell shape"/>
    <property type="evidence" value="ECO:0007669"/>
    <property type="project" value="UniProtKB-KW"/>
</dbReference>
<dbReference type="Gene3D" id="3.30.465.10">
    <property type="match status" value="1"/>
</dbReference>
<dbReference type="Gene3D" id="3.90.78.10">
    <property type="entry name" value="UDP-N-acetylenolpyruvoylglucosamine reductase, C-terminal domain"/>
    <property type="match status" value="1"/>
</dbReference>
<dbReference type="Gene3D" id="3.30.43.10">
    <property type="entry name" value="Uridine Diphospho-n-acetylenolpyruvylglucosamine Reductase, domain 2"/>
    <property type="match status" value="1"/>
</dbReference>
<dbReference type="HAMAP" id="MF_00037">
    <property type="entry name" value="MurB"/>
    <property type="match status" value="1"/>
</dbReference>
<dbReference type="InterPro" id="IPR016166">
    <property type="entry name" value="FAD-bd_PCMH"/>
</dbReference>
<dbReference type="InterPro" id="IPR036318">
    <property type="entry name" value="FAD-bd_PCMH-like_sf"/>
</dbReference>
<dbReference type="InterPro" id="IPR016167">
    <property type="entry name" value="FAD-bd_PCMH_sub1"/>
</dbReference>
<dbReference type="InterPro" id="IPR016169">
    <property type="entry name" value="FAD-bd_PCMH_sub2"/>
</dbReference>
<dbReference type="InterPro" id="IPR003170">
    <property type="entry name" value="MurB"/>
</dbReference>
<dbReference type="InterPro" id="IPR011601">
    <property type="entry name" value="MurB_C"/>
</dbReference>
<dbReference type="InterPro" id="IPR036635">
    <property type="entry name" value="MurB_C_sf"/>
</dbReference>
<dbReference type="InterPro" id="IPR006094">
    <property type="entry name" value="Oxid_FAD_bind_N"/>
</dbReference>
<dbReference type="NCBIfam" id="TIGR00179">
    <property type="entry name" value="murB"/>
    <property type="match status" value="1"/>
</dbReference>
<dbReference type="NCBIfam" id="NF010480">
    <property type="entry name" value="PRK13905.1"/>
    <property type="match status" value="1"/>
</dbReference>
<dbReference type="PANTHER" id="PTHR21071">
    <property type="entry name" value="UDP-N-ACETYLENOLPYRUVOYLGLUCOSAMINE REDUCTASE"/>
    <property type="match status" value="1"/>
</dbReference>
<dbReference type="PANTHER" id="PTHR21071:SF4">
    <property type="entry name" value="UDP-N-ACETYLENOLPYRUVOYLGLUCOSAMINE REDUCTASE"/>
    <property type="match status" value="1"/>
</dbReference>
<dbReference type="Pfam" id="PF01565">
    <property type="entry name" value="FAD_binding_4"/>
    <property type="match status" value="1"/>
</dbReference>
<dbReference type="Pfam" id="PF02873">
    <property type="entry name" value="MurB_C"/>
    <property type="match status" value="1"/>
</dbReference>
<dbReference type="SUPFAM" id="SSF56176">
    <property type="entry name" value="FAD-binding/transporter-associated domain-like"/>
    <property type="match status" value="1"/>
</dbReference>
<dbReference type="SUPFAM" id="SSF56194">
    <property type="entry name" value="Uridine diphospho-N-Acetylenolpyruvylglucosamine reductase, MurB, C-terminal domain"/>
    <property type="match status" value="1"/>
</dbReference>
<dbReference type="PROSITE" id="PS51387">
    <property type="entry name" value="FAD_PCMH"/>
    <property type="match status" value="1"/>
</dbReference>
<comment type="function">
    <text evidence="1">Cell wall formation.</text>
</comment>
<comment type="catalytic activity">
    <reaction evidence="1">
        <text>UDP-N-acetyl-alpha-D-muramate + NADP(+) = UDP-N-acetyl-3-O-(1-carboxyvinyl)-alpha-D-glucosamine + NADPH + H(+)</text>
        <dbReference type="Rhea" id="RHEA:12248"/>
        <dbReference type="ChEBI" id="CHEBI:15378"/>
        <dbReference type="ChEBI" id="CHEBI:57783"/>
        <dbReference type="ChEBI" id="CHEBI:58349"/>
        <dbReference type="ChEBI" id="CHEBI:68483"/>
        <dbReference type="ChEBI" id="CHEBI:70757"/>
        <dbReference type="EC" id="1.3.1.98"/>
    </reaction>
</comment>
<comment type="cofactor">
    <cofactor evidence="1">
        <name>FAD</name>
        <dbReference type="ChEBI" id="CHEBI:57692"/>
    </cofactor>
</comment>
<comment type="pathway">
    <text evidence="1">Cell wall biogenesis; peptidoglycan biosynthesis.</text>
</comment>
<comment type="subcellular location">
    <subcellularLocation>
        <location evidence="1">Cytoplasm</location>
    </subcellularLocation>
</comment>
<comment type="similarity">
    <text evidence="1">Belongs to the MurB family.</text>
</comment>
<proteinExistence type="inferred from homology"/>
<protein>
    <recommendedName>
        <fullName evidence="1">UDP-N-acetylenolpyruvoylglucosamine reductase</fullName>
        <ecNumber evidence="1">1.3.1.98</ecNumber>
    </recommendedName>
    <alternativeName>
        <fullName evidence="1">UDP-N-acetylmuramate dehydrogenase</fullName>
    </alternativeName>
</protein>
<organism>
    <name type="scientific">Rickettsia rickettsii (strain Sheila Smith)</name>
    <dbReference type="NCBI Taxonomy" id="392021"/>
    <lineage>
        <taxon>Bacteria</taxon>
        <taxon>Pseudomonadati</taxon>
        <taxon>Pseudomonadota</taxon>
        <taxon>Alphaproteobacteria</taxon>
        <taxon>Rickettsiales</taxon>
        <taxon>Rickettsiaceae</taxon>
        <taxon>Rickettsieae</taxon>
        <taxon>Rickettsia</taxon>
        <taxon>spotted fever group</taxon>
    </lineage>
</organism>